<name>CTPM_PSEAE</name>
<evidence type="ECO:0000255" key="1"/>
<evidence type="ECO:0000255" key="2">
    <source>
        <dbReference type="PROSITE-ProRule" id="PRU00102"/>
    </source>
</evidence>
<evidence type="ECO:0000255" key="3">
    <source>
        <dbReference type="PROSITE-ProRule" id="PRU00284"/>
    </source>
</evidence>
<evidence type="ECO:0000256" key="4">
    <source>
        <dbReference type="SAM" id="MobiDB-lite"/>
    </source>
</evidence>
<evidence type="ECO:0000269" key="5">
    <source>
    </source>
</evidence>
<evidence type="ECO:0000269" key="6">
    <source>
    </source>
</evidence>
<evidence type="ECO:0000305" key="7"/>
<organism>
    <name type="scientific">Pseudomonas aeruginosa (strain ATCC 15692 / DSM 22644 / CIP 104116 / JCM 14847 / LMG 12228 / 1C / PRS 101 / PAO1)</name>
    <dbReference type="NCBI Taxonomy" id="208964"/>
    <lineage>
        <taxon>Bacteria</taxon>
        <taxon>Pseudomonadati</taxon>
        <taxon>Pseudomonadota</taxon>
        <taxon>Gammaproteobacteria</taxon>
        <taxon>Pseudomonadales</taxon>
        <taxon>Pseudomonadaceae</taxon>
        <taxon>Pseudomonas</taxon>
    </lineage>
</organism>
<sequence>MMRLTLKSKVLLLAMVPVLLFALVLSGGAVLILKKQADAEVKDTRERLLGDRRAELEHYVQIAMGSIQAEYDRSANGDLNARAEAIARLSKIKYGKDGYIFGYDSQVVRLFRGDSPVDVGKSFRDRRDPSGVYLNRELVEAGRNGSHYVTYTSPLPGNESVMVPKLSYTLYLPKWDMVIGSAINLDGVEAQLVEIKQDIDERIGTLIASIVGIAGVLLVVLLVIGLAVANAMLRPLHQIRQNLDDIAAGEGDLTRRLPVTSYDELGELAGSFNRFVEKIHGLVRQIAGMTGDLKQLVEQMSAQAERSEQAMERQRHETDQVATAINEMSAAAHEVAQSAQRAAEAAQQTDHEGQAAKRVVDGSIERIHALVDEIRDSGTSLDSLQQDVQSIVSVLGVIRSIAEQTNLLALNAAIEAARAGEAGRGFAVVADEVRALASRTQQSTQEIQGMIDRLQQGTNAAVDAMRRSGEAGEGTSNQANQAGDSLDAIAQLIATINAMNAQIASAAEEQTAVAEEINRSVHQIAGAVDSVADEAQQGAQTARSLAQLGQGLGRLVGQFRI</sequence>
<reference key="1">
    <citation type="journal article" date="2000" name="Nature">
        <title>Complete genome sequence of Pseudomonas aeruginosa PAO1, an opportunistic pathogen.</title>
        <authorList>
            <person name="Stover C.K."/>
            <person name="Pham X.-Q.T."/>
            <person name="Erwin A.L."/>
            <person name="Mizoguchi S.D."/>
            <person name="Warrener P."/>
            <person name="Hickey M.J."/>
            <person name="Brinkman F.S.L."/>
            <person name="Hufnagle W.O."/>
            <person name="Kowalik D.J."/>
            <person name="Lagrou M."/>
            <person name="Garber R.L."/>
            <person name="Goltry L."/>
            <person name="Tolentino E."/>
            <person name="Westbrock-Wadman S."/>
            <person name="Yuan Y."/>
            <person name="Brody L.L."/>
            <person name="Coulter S.N."/>
            <person name="Folger K.R."/>
            <person name="Kas A."/>
            <person name="Larbig K."/>
            <person name="Lim R.M."/>
            <person name="Smith K.A."/>
            <person name="Spencer D.H."/>
            <person name="Wong G.K.-S."/>
            <person name="Wu Z."/>
            <person name="Paulsen I.T."/>
            <person name="Reizer J."/>
            <person name="Saier M.H. Jr."/>
            <person name="Hancock R.E.W."/>
            <person name="Lory S."/>
            <person name="Olson M.V."/>
        </authorList>
    </citation>
    <scope>NUCLEOTIDE SEQUENCE [LARGE SCALE GENOMIC DNA]</scope>
    <source>
        <strain>ATCC 15692 / DSM 22644 / CIP 104116 / JCM 14847 / LMG 12228 / 1C / PRS 101 / PAO1</strain>
    </source>
</reference>
<reference key="2">
    <citation type="journal article" date="2007" name="Appl. Environ. Microbiol.">
        <title>Identification of a malate chemoreceptor in Pseudomonas aeruginosa by screening for chemotaxis defects in an energy taxis-deficient mutant.</title>
        <authorList>
            <person name="Alvarez-Ortega C."/>
            <person name="Harwood C.S."/>
        </authorList>
    </citation>
    <scope>FUNCTION</scope>
    <scope>DISRUPTION PHENOTYPE</scope>
</reference>
<reference key="3">
    <citation type="journal article" date="2018" name="Sci. Rep.">
        <title>The activity of the C4-dicarboxylic acid chemoreceptor of Pseudomonas aeruginosa is controlled by chemoattractants and antagonists.</title>
        <authorList>
            <person name="Martin-Mora D."/>
            <person name="Ortega A."/>
            <person name="Perez-Maldonado F.J."/>
            <person name="Krell T."/>
            <person name="Matilla M.A."/>
        </authorList>
    </citation>
    <scope>FUNCTION</scope>
    <scope>SUBUNIT</scope>
    <scope>DISRUPTION PHENOTYPE</scope>
</reference>
<gene>
    <name evidence="7" type="primary">ctpM</name>
    <name type="ordered locus">PA2652</name>
</gene>
<comment type="function">
    <text evidence="5 6 7">Chemotactic-signal transducers respond to changes in the concentration of attractants and repellents in the environment, transduce a signal from the outside to the inside of the cell, and facilitate sensory adaptation through the variation of the level of methylation (Probable). Directly recognizes five C4-dicarboxylic acids: L-malic, citramalic, citraconic, bromosuccinic and methylsuccinic acids (PubMed:17933940, PubMed:29391435). Three of the identified ligands act as chemoattractants (L-malic, D,L-bromosuccinic and L-citramalic acids) whereas two of them (L-methylsuccinic and citraconic acids) behave as antagonists by inhibiting the downstream chemotaxis signaling cascade (PubMed:29391435). Antagonists compete with chemoattractants, thereby decreasing the affinity for chemoattractants and the subsequent chemotactic response (PubMed:29391435). Acts through the che chemosensory pathway (PubMed:29391435).</text>
</comment>
<comment type="subunit">
    <text evidence="6">Homodimer. The ligand-binding domain (LBD) is dimeric in the presence and the absence of ligands.</text>
</comment>
<comment type="subcellular location">
    <subcellularLocation>
        <location evidence="7">Cell inner membrane</location>
        <topology evidence="1">Multi-pass membrane protein</topology>
    </subcellularLocation>
</comment>
<comment type="disruption phenotype">
    <text evidence="5 6">Mutant shows a dramatic reduction in chemotaxis for all ligands, but it does not affect response to casamino acids (PubMed:29391435). Mutant showed no attraction to malate at any of the concentrations tested (PubMed:17933940). Mutation does not affect plant root colonization (PubMed:29391435).</text>
</comment>
<comment type="similarity">
    <text evidence="7">Belongs to the methyl-accepting chemotaxis (MCP) protein family.</text>
</comment>
<accession>Q9I0I6</accession>
<proteinExistence type="evidence at protein level"/>
<keyword id="KW-0997">Cell inner membrane</keyword>
<keyword id="KW-1003">Cell membrane</keyword>
<keyword id="KW-0145">Chemotaxis</keyword>
<keyword id="KW-0472">Membrane</keyword>
<keyword id="KW-0488">Methylation</keyword>
<keyword id="KW-1185">Reference proteome</keyword>
<keyword id="KW-0807">Transducer</keyword>
<keyword id="KW-0812">Transmembrane</keyword>
<keyword id="KW-1133">Transmembrane helix</keyword>
<feature type="chain" id="PRO_0000424880" description="Methyl-accepting chemotaxis protein CtpM">
    <location>
        <begin position="1"/>
        <end position="561"/>
    </location>
</feature>
<feature type="topological domain" description="Cytoplasmic" evidence="7">
    <location>
        <begin position="1"/>
        <end position="11"/>
    </location>
</feature>
<feature type="transmembrane region" description="Helical" evidence="1">
    <location>
        <begin position="12"/>
        <end position="32"/>
    </location>
</feature>
<feature type="topological domain" description="Periplasmic" evidence="7">
    <location>
        <begin position="33"/>
        <end position="205"/>
    </location>
</feature>
<feature type="transmembrane region" description="Helical" evidence="1">
    <location>
        <begin position="206"/>
        <end position="226"/>
    </location>
</feature>
<feature type="topological domain" description="Cytoplasmic" evidence="7">
    <location>
        <begin position="227"/>
        <end position="561"/>
    </location>
</feature>
<feature type="domain" description="HAMP" evidence="2">
    <location>
        <begin position="230"/>
        <end position="284"/>
    </location>
</feature>
<feature type="domain" description="Methyl-accepting transducer" evidence="3">
    <location>
        <begin position="289"/>
        <end position="525"/>
    </location>
</feature>
<feature type="region of interest" description="Disordered" evidence="4">
    <location>
        <begin position="333"/>
        <end position="357"/>
    </location>
</feature>
<feature type="compositionally biased region" description="Low complexity" evidence="4">
    <location>
        <begin position="336"/>
        <end position="348"/>
    </location>
</feature>
<dbReference type="EMBL" id="AE004091">
    <property type="protein sequence ID" value="AAG06040.1"/>
    <property type="molecule type" value="Genomic_DNA"/>
</dbReference>
<dbReference type="PIR" id="G83313">
    <property type="entry name" value="G83313"/>
</dbReference>
<dbReference type="RefSeq" id="NP_251342.1">
    <property type="nucleotide sequence ID" value="NC_002516.2"/>
</dbReference>
<dbReference type="RefSeq" id="WP_010895628.1">
    <property type="nucleotide sequence ID" value="NZ_QZGE01000008.1"/>
</dbReference>
<dbReference type="SMR" id="Q9I0I6"/>
<dbReference type="STRING" id="208964.PA2652"/>
<dbReference type="PaxDb" id="208964-PA2652"/>
<dbReference type="GeneID" id="882361"/>
<dbReference type="KEGG" id="pae:PA2652"/>
<dbReference type="PATRIC" id="fig|208964.12.peg.2775"/>
<dbReference type="PseudoCAP" id="PA2652"/>
<dbReference type="HOGENOM" id="CLU_000445_107_27_6"/>
<dbReference type="InParanoid" id="Q9I0I6"/>
<dbReference type="OrthoDB" id="2489132at2"/>
<dbReference type="PhylomeDB" id="Q9I0I6"/>
<dbReference type="BioCyc" id="PAER208964:G1FZ6-2692-MONOMER"/>
<dbReference type="Proteomes" id="UP000002438">
    <property type="component" value="Chromosome"/>
</dbReference>
<dbReference type="GO" id="GO:0005886">
    <property type="term" value="C:plasma membrane"/>
    <property type="evidence" value="ECO:0007669"/>
    <property type="project" value="UniProtKB-SubCell"/>
</dbReference>
<dbReference type="GO" id="GO:0004888">
    <property type="term" value="F:transmembrane signaling receptor activity"/>
    <property type="evidence" value="ECO:0007669"/>
    <property type="project" value="InterPro"/>
</dbReference>
<dbReference type="GO" id="GO:0006935">
    <property type="term" value="P:chemotaxis"/>
    <property type="evidence" value="ECO:0000315"/>
    <property type="project" value="PseudoCAP"/>
</dbReference>
<dbReference type="GO" id="GO:0050918">
    <property type="term" value="P:positive chemotaxis"/>
    <property type="evidence" value="ECO:0000315"/>
    <property type="project" value="PseudoCAP"/>
</dbReference>
<dbReference type="GO" id="GO:0007165">
    <property type="term" value="P:signal transduction"/>
    <property type="evidence" value="ECO:0007669"/>
    <property type="project" value="UniProtKB-KW"/>
</dbReference>
<dbReference type="CDD" id="cd06225">
    <property type="entry name" value="HAMP"/>
    <property type="match status" value="1"/>
</dbReference>
<dbReference type="CDD" id="cd11386">
    <property type="entry name" value="MCP_signal"/>
    <property type="match status" value="1"/>
</dbReference>
<dbReference type="FunFam" id="1.10.287.950:FF:000001">
    <property type="entry name" value="Methyl-accepting chemotaxis sensory transducer"/>
    <property type="match status" value="1"/>
</dbReference>
<dbReference type="Gene3D" id="1.10.287.950">
    <property type="entry name" value="Methyl-accepting chemotaxis protein"/>
    <property type="match status" value="1"/>
</dbReference>
<dbReference type="Gene3D" id="3.30.450.20">
    <property type="entry name" value="PAS domain"/>
    <property type="match status" value="1"/>
</dbReference>
<dbReference type="InterPro" id="IPR004090">
    <property type="entry name" value="Chemotax_Me-accpt_rcpt"/>
</dbReference>
<dbReference type="InterPro" id="IPR003660">
    <property type="entry name" value="HAMP_dom"/>
</dbReference>
<dbReference type="InterPro" id="IPR004089">
    <property type="entry name" value="MCPsignal_dom"/>
</dbReference>
<dbReference type="InterPro" id="IPR033480">
    <property type="entry name" value="sCache_2"/>
</dbReference>
<dbReference type="InterPro" id="IPR000727">
    <property type="entry name" value="T_SNARE_dom"/>
</dbReference>
<dbReference type="PANTHER" id="PTHR32089:SF119">
    <property type="entry name" value="METHYL-ACCEPTING CHEMOTAXIS PROTEIN CTPL"/>
    <property type="match status" value="1"/>
</dbReference>
<dbReference type="PANTHER" id="PTHR32089">
    <property type="entry name" value="METHYL-ACCEPTING CHEMOTAXIS PROTEIN MCPB"/>
    <property type="match status" value="1"/>
</dbReference>
<dbReference type="Pfam" id="PF00672">
    <property type="entry name" value="HAMP"/>
    <property type="match status" value="1"/>
</dbReference>
<dbReference type="Pfam" id="PF00015">
    <property type="entry name" value="MCPsignal"/>
    <property type="match status" value="1"/>
</dbReference>
<dbReference type="Pfam" id="PF17200">
    <property type="entry name" value="sCache_2"/>
    <property type="match status" value="1"/>
</dbReference>
<dbReference type="PRINTS" id="PR00260">
    <property type="entry name" value="CHEMTRNSDUCR"/>
</dbReference>
<dbReference type="SMART" id="SM01049">
    <property type="entry name" value="Cache_2"/>
    <property type="match status" value="1"/>
</dbReference>
<dbReference type="SMART" id="SM00304">
    <property type="entry name" value="HAMP"/>
    <property type="match status" value="1"/>
</dbReference>
<dbReference type="SMART" id="SM00283">
    <property type="entry name" value="MA"/>
    <property type="match status" value="1"/>
</dbReference>
<dbReference type="SUPFAM" id="SSF58104">
    <property type="entry name" value="Methyl-accepting chemotaxis protein (MCP) signaling domain"/>
    <property type="match status" value="1"/>
</dbReference>
<dbReference type="PROSITE" id="PS50111">
    <property type="entry name" value="CHEMOTAXIS_TRANSDUC_2"/>
    <property type="match status" value="1"/>
</dbReference>
<dbReference type="PROSITE" id="PS50885">
    <property type="entry name" value="HAMP"/>
    <property type="match status" value="1"/>
</dbReference>
<protein>
    <recommendedName>
        <fullName evidence="7">Methyl-accepting chemotaxis protein CtpM</fullName>
    </recommendedName>
</protein>